<accession>Q6DRD3</accession>
<feature type="chain" id="PRO_0000218781" description="DNA polymerase beta">
    <location>
        <begin position="1"/>
        <end position="336"/>
    </location>
</feature>
<feature type="region of interest" description="DNA-binding" evidence="2">
    <location>
        <begin position="182"/>
        <end position="191"/>
    </location>
</feature>
<feature type="active site" description="Nucleophile; Schiff-base intermediate with DNA; for 5'-dRP lyase activity" evidence="2">
    <location>
        <position position="71"/>
    </location>
</feature>
<feature type="binding site" evidence="2">
    <location>
        <position position="59"/>
    </location>
    <ligand>
        <name>K(+)</name>
        <dbReference type="ChEBI" id="CHEBI:29103"/>
        <label>1</label>
    </ligand>
</feature>
<feature type="binding site" evidence="2">
    <location>
        <position position="59"/>
    </location>
    <ligand>
        <name>Na(+)</name>
        <dbReference type="ChEBI" id="CHEBI:29101"/>
        <label>1</label>
    </ligand>
</feature>
<feature type="binding site" evidence="2">
    <location>
        <position position="61"/>
    </location>
    <ligand>
        <name>K(+)</name>
        <dbReference type="ChEBI" id="CHEBI:29103"/>
        <label>1</label>
    </ligand>
</feature>
<feature type="binding site" evidence="2">
    <location>
        <position position="61"/>
    </location>
    <ligand>
        <name>Na(+)</name>
        <dbReference type="ChEBI" id="CHEBI:29101"/>
        <label>1</label>
    </ligand>
</feature>
<feature type="binding site" evidence="2">
    <location>
        <position position="64"/>
    </location>
    <ligand>
        <name>K(+)</name>
        <dbReference type="ChEBI" id="CHEBI:29103"/>
        <label>1</label>
    </ligand>
</feature>
<feature type="binding site" evidence="2">
    <location>
        <position position="64"/>
    </location>
    <ligand>
        <name>Na(+)</name>
        <dbReference type="ChEBI" id="CHEBI:29101"/>
        <label>1</label>
    </ligand>
</feature>
<feature type="binding site" evidence="2">
    <location>
        <position position="100"/>
    </location>
    <ligand>
        <name>K(+)</name>
        <dbReference type="ChEBI" id="CHEBI:29103"/>
        <label>2</label>
    </ligand>
</feature>
<feature type="binding site" evidence="2">
    <location>
        <position position="100"/>
    </location>
    <ligand>
        <name>Na(+)</name>
        <dbReference type="ChEBI" id="CHEBI:29101"/>
        <label>2</label>
    </ligand>
</feature>
<feature type="binding site" evidence="2">
    <location>
        <position position="102"/>
    </location>
    <ligand>
        <name>K(+)</name>
        <dbReference type="ChEBI" id="CHEBI:29103"/>
        <label>2</label>
    </ligand>
</feature>
<feature type="binding site" evidence="2">
    <location>
        <position position="102"/>
    </location>
    <ligand>
        <name>Na(+)</name>
        <dbReference type="ChEBI" id="CHEBI:29101"/>
        <label>2</label>
    </ligand>
</feature>
<feature type="binding site" evidence="2">
    <location>
        <position position="105"/>
    </location>
    <ligand>
        <name>K(+)</name>
        <dbReference type="ChEBI" id="CHEBI:29103"/>
        <label>2</label>
    </ligand>
</feature>
<feature type="binding site" evidence="2">
    <location>
        <position position="105"/>
    </location>
    <ligand>
        <name>Na(+)</name>
        <dbReference type="ChEBI" id="CHEBI:29101"/>
        <label>2</label>
    </ligand>
</feature>
<feature type="binding site" evidence="2">
    <location>
        <position position="148"/>
    </location>
    <ligand>
        <name>a 2'-deoxyribonucleoside 5'-triphosphate</name>
        <dbReference type="ChEBI" id="CHEBI:61560"/>
    </ligand>
</feature>
<feature type="binding site" evidence="2">
    <location>
        <position position="179"/>
    </location>
    <ligand>
        <name>a 2'-deoxyribonucleoside 5'-triphosphate</name>
        <dbReference type="ChEBI" id="CHEBI:61560"/>
    </ligand>
</feature>
<feature type="binding site" evidence="2">
    <location>
        <position position="182"/>
    </location>
    <ligand>
        <name>a 2'-deoxyribonucleoside 5'-triphosphate</name>
        <dbReference type="ChEBI" id="CHEBI:61560"/>
    </ligand>
</feature>
<feature type="binding site" evidence="2">
    <location>
        <position position="188"/>
    </location>
    <ligand>
        <name>a 2'-deoxyribonucleoside 5'-triphosphate</name>
        <dbReference type="ChEBI" id="CHEBI:61560"/>
    </ligand>
</feature>
<feature type="binding site" evidence="2">
    <location>
        <position position="189"/>
    </location>
    <ligand>
        <name>a 2'-deoxyribonucleoside 5'-triphosphate</name>
        <dbReference type="ChEBI" id="CHEBI:61560"/>
    </ligand>
</feature>
<feature type="binding site" evidence="2">
    <location>
        <position position="189"/>
    </location>
    <ligand>
        <name>Mg(2+)</name>
        <dbReference type="ChEBI" id="CHEBI:18420"/>
        <label>1</label>
    </ligand>
</feature>
<feature type="binding site" evidence="2">
    <location>
        <position position="189"/>
    </location>
    <ligand>
        <name>Mg(2+)</name>
        <dbReference type="ChEBI" id="CHEBI:18420"/>
        <label>2</label>
    </ligand>
</feature>
<feature type="binding site" evidence="2">
    <location>
        <position position="191"/>
    </location>
    <ligand>
        <name>Mg(2+)</name>
        <dbReference type="ChEBI" id="CHEBI:18420"/>
        <label>1</label>
    </ligand>
</feature>
<feature type="binding site" evidence="2">
    <location>
        <position position="191"/>
    </location>
    <ligand>
        <name>Mg(2+)</name>
        <dbReference type="ChEBI" id="CHEBI:18420"/>
        <label>2</label>
    </ligand>
</feature>
<feature type="binding site" evidence="2">
    <location>
        <position position="257"/>
    </location>
    <ligand>
        <name>Mg(2+)</name>
        <dbReference type="ChEBI" id="CHEBI:18420"/>
        <label>2</label>
    </ligand>
</feature>
<feature type="modified residue" description="Omega-N-methylarginine; by PRMT6" evidence="1">
    <location>
        <position position="82"/>
    </location>
</feature>
<feature type="modified residue" description="Omega-N-methylarginine; by PRMT6" evidence="1">
    <location>
        <position position="151"/>
    </location>
</feature>
<gene>
    <name type="primary">polb</name>
</gene>
<name>DPOLB_DANRE</name>
<reference key="1">
    <citation type="journal article" date="2004" name="Proc. Natl. Acad. Sci. U.S.A.">
        <title>Identification of 315 genes essential for early zebrafish development.</title>
        <authorList>
            <person name="Amsterdam A."/>
            <person name="Nissen R.M."/>
            <person name="Sun Z."/>
            <person name="Swindell E.C."/>
            <person name="Farrington S."/>
            <person name="Hopkins N."/>
        </authorList>
    </citation>
    <scope>NUCLEOTIDE SEQUENCE [LARGE SCALE MRNA]</scope>
</reference>
<proteinExistence type="evidence at transcript level"/>
<protein>
    <recommendedName>
        <fullName evidence="2">DNA polymerase beta</fullName>
        <ecNumber evidence="2">2.7.7.7</ecNumber>
    </recommendedName>
    <alternativeName>
        <fullName evidence="2">5'-deoxyribose-phosphate lyase</fullName>
        <shortName evidence="2">5'-dRP lyase</shortName>
        <ecNumber evidence="2">4.2.99.-</ecNumber>
    </alternativeName>
    <alternativeName>
        <fullName evidence="2">AP lyase</fullName>
        <ecNumber evidence="2">4.2.99.18</ecNumber>
    </alternativeName>
</protein>
<dbReference type="EC" id="2.7.7.7" evidence="2"/>
<dbReference type="EC" id="4.2.99.-" evidence="2"/>
<dbReference type="EC" id="4.2.99.18" evidence="2"/>
<dbReference type="EMBL" id="AY648826">
    <property type="protein sequence ID" value="AAT68144.1"/>
    <property type="molecule type" value="mRNA"/>
</dbReference>
<dbReference type="SMR" id="Q6DRD3"/>
<dbReference type="FunCoup" id="Q6DRD3">
    <property type="interactions" value="503"/>
</dbReference>
<dbReference type="STRING" id="7955.ENSDARP00000017489"/>
<dbReference type="PaxDb" id="7955-ENSDARP00000017489"/>
<dbReference type="PeptideAtlas" id="Q6DRD3"/>
<dbReference type="AGR" id="ZFIN:ZDB-GENE-040830-1"/>
<dbReference type="ZFIN" id="ZDB-GENE-040830-1">
    <property type="gene designation" value="polb"/>
</dbReference>
<dbReference type="eggNOG" id="KOG2534">
    <property type="taxonomic scope" value="Eukaryota"/>
</dbReference>
<dbReference type="InParanoid" id="Q6DRD3"/>
<dbReference type="OrthoDB" id="205514at2759"/>
<dbReference type="BRENDA" id="2.7.7.7">
    <property type="organism ID" value="928"/>
</dbReference>
<dbReference type="Reactome" id="R-DRE-110362">
    <property type="pathway name" value="POLB-Dependent Long Patch Base Excision Repair"/>
</dbReference>
<dbReference type="Reactome" id="R-DRE-110373">
    <property type="pathway name" value="Resolution of AP sites via the multiple-nucleotide patch replacement pathway"/>
</dbReference>
<dbReference type="Reactome" id="R-DRE-5649702">
    <property type="pathway name" value="APEX1-Independent Resolution of AP Sites via the Single Nucleotide Replacement Pathway"/>
</dbReference>
<dbReference type="Reactome" id="R-DRE-73930">
    <property type="pathway name" value="Abasic sugar-phosphate removal via the single-nucleotide replacement pathway"/>
</dbReference>
<dbReference type="PRO" id="PR:Q6DRD3"/>
<dbReference type="Proteomes" id="UP000000437">
    <property type="component" value="Unplaced"/>
</dbReference>
<dbReference type="GO" id="GO:0005737">
    <property type="term" value="C:cytoplasm"/>
    <property type="evidence" value="ECO:0000250"/>
    <property type="project" value="UniProtKB"/>
</dbReference>
<dbReference type="GO" id="GO:0005634">
    <property type="term" value="C:nucleus"/>
    <property type="evidence" value="ECO:0000318"/>
    <property type="project" value="GO_Central"/>
</dbReference>
<dbReference type="GO" id="GO:0051575">
    <property type="term" value="F:5'-deoxyribose-5-phosphate lyase activity"/>
    <property type="evidence" value="ECO:0007669"/>
    <property type="project" value="RHEA"/>
</dbReference>
<dbReference type="GO" id="GO:0140078">
    <property type="term" value="F:class I DNA-(apurinic or apyrimidinic site) endonuclease activity"/>
    <property type="evidence" value="ECO:0007669"/>
    <property type="project" value="RHEA"/>
</dbReference>
<dbReference type="GO" id="GO:0003677">
    <property type="term" value="F:DNA binding"/>
    <property type="evidence" value="ECO:0007669"/>
    <property type="project" value="UniProtKB-KW"/>
</dbReference>
<dbReference type="GO" id="GO:0003887">
    <property type="term" value="F:DNA-directed DNA polymerase activity"/>
    <property type="evidence" value="ECO:0000314"/>
    <property type="project" value="ZFIN"/>
</dbReference>
<dbReference type="GO" id="GO:0016829">
    <property type="term" value="F:lyase activity"/>
    <property type="evidence" value="ECO:0000250"/>
    <property type="project" value="UniProtKB"/>
</dbReference>
<dbReference type="GO" id="GO:0046872">
    <property type="term" value="F:metal ion binding"/>
    <property type="evidence" value="ECO:0007669"/>
    <property type="project" value="UniProtKB-KW"/>
</dbReference>
<dbReference type="GO" id="GO:0006284">
    <property type="term" value="P:base-excision repair"/>
    <property type="evidence" value="ECO:0000250"/>
    <property type="project" value="UniProtKB"/>
</dbReference>
<dbReference type="GO" id="GO:0006974">
    <property type="term" value="P:DNA damage response"/>
    <property type="evidence" value="ECO:0000250"/>
    <property type="project" value="UniProtKB"/>
</dbReference>
<dbReference type="GO" id="GO:0006260">
    <property type="term" value="P:DNA replication"/>
    <property type="evidence" value="ECO:0007669"/>
    <property type="project" value="UniProtKB-KW"/>
</dbReference>
<dbReference type="GO" id="GO:0006303">
    <property type="term" value="P:double-strand break repair via nonhomologous end joining"/>
    <property type="evidence" value="ECO:0000318"/>
    <property type="project" value="GO_Central"/>
</dbReference>
<dbReference type="CDD" id="cd00141">
    <property type="entry name" value="NT_POLXc"/>
    <property type="match status" value="1"/>
</dbReference>
<dbReference type="FunFam" id="3.30.210.10:FF:000002">
    <property type="entry name" value="DNA polymerase"/>
    <property type="match status" value="1"/>
</dbReference>
<dbReference type="FunFam" id="1.10.150.110:FF:000002">
    <property type="entry name" value="DNA polymerase beta"/>
    <property type="match status" value="1"/>
</dbReference>
<dbReference type="FunFam" id="1.10.150.20:FF:000026">
    <property type="entry name" value="DNA polymerase beta"/>
    <property type="match status" value="1"/>
</dbReference>
<dbReference type="FunFam" id="3.30.460.10:FF:000021">
    <property type="entry name" value="DNA polymerase beta"/>
    <property type="match status" value="1"/>
</dbReference>
<dbReference type="Gene3D" id="1.10.150.20">
    <property type="entry name" value="5' to 3' exonuclease, C-terminal subdomain"/>
    <property type="match status" value="1"/>
</dbReference>
<dbReference type="Gene3D" id="3.30.460.10">
    <property type="entry name" value="Beta Polymerase, domain 2"/>
    <property type="match status" value="1"/>
</dbReference>
<dbReference type="Gene3D" id="1.10.150.110">
    <property type="entry name" value="DNA polymerase beta, N-terminal domain-like"/>
    <property type="match status" value="1"/>
</dbReference>
<dbReference type="Gene3D" id="3.30.210.10">
    <property type="entry name" value="DNA polymerase, thumb domain"/>
    <property type="match status" value="1"/>
</dbReference>
<dbReference type="InterPro" id="IPR002054">
    <property type="entry name" value="DNA-dir_DNA_pol_X"/>
</dbReference>
<dbReference type="InterPro" id="IPR019843">
    <property type="entry name" value="DNA_pol-X_BS"/>
</dbReference>
<dbReference type="InterPro" id="IPR010996">
    <property type="entry name" value="DNA_pol_b-like_N"/>
</dbReference>
<dbReference type="InterPro" id="IPR028207">
    <property type="entry name" value="DNA_pol_B_palm_palm"/>
</dbReference>
<dbReference type="InterPro" id="IPR018944">
    <property type="entry name" value="DNA_pol_lambd_fingers_domain"/>
</dbReference>
<dbReference type="InterPro" id="IPR027421">
    <property type="entry name" value="DNA_pol_lamdba_lyase_dom_sf"/>
</dbReference>
<dbReference type="InterPro" id="IPR037160">
    <property type="entry name" value="DNA_Pol_thumb_sf"/>
</dbReference>
<dbReference type="InterPro" id="IPR022312">
    <property type="entry name" value="DNA_pol_X"/>
</dbReference>
<dbReference type="InterPro" id="IPR002008">
    <property type="entry name" value="DNA_pol_X_beta-like"/>
</dbReference>
<dbReference type="InterPro" id="IPR003583">
    <property type="entry name" value="Hlx-hairpin-Hlx_DNA-bd_motif"/>
</dbReference>
<dbReference type="InterPro" id="IPR043519">
    <property type="entry name" value="NT_sf"/>
</dbReference>
<dbReference type="InterPro" id="IPR029398">
    <property type="entry name" value="PolB_thumb"/>
</dbReference>
<dbReference type="PANTHER" id="PTHR11276:SF42">
    <property type="entry name" value="DNA POLYMERASE BETA"/>
    <property type="match status" value="1"/>
</dbReference>
<dbReference type="PANTHER" id="PTHR11276">
    <property type="entry name" value="DNA POLYMERASE TYPE-X FAMILY MEMBER"/>
    <property type="match status" value="1"/>
</dbReference>
<dbReference type="Pfam" id="PF14792">
    <property type="entry name" value="DNA_pol_B_palm"/>
    <property type="match status" value="1"/>
</dbReference>
<dbReference type="Pfam" id="PF14791">
    <property type="entry name" value="DNA_pol_B_thumb"/>
    <property type="match status" value="1"/>
</dbReference>
<dbReference type="Pfam" id="PF10391">
    <property type="entry name" value="DNA_pol_lambd_f"/>
    <property type="match status" value="1"/>
</dbReference>
<dbReference type="Pfam" id="PF14716">
    <property type="entry name" value="HHH_8"/>
    <property type="match status" value="1"/>
</dbReference>
<dbReference type="PRINTS" id="PR00869">
    <property type="entry name" value="DNAPOLX"/>
</dbReference>
<dbReference type="PRINTS" id="PR00870">
    <property type="entry name" value="DNAPOLXBETA"/>
</dbReference>
<dbReference type="SMART" id="SM00278">
    <property type="entry name" value="HhH1"/>
    <property type="match status" value="2"/>
</dbReference>
<dbReference type="SMART" id="SM00483">
    <property type="entry name" value="POLXc"/>
    <property type="match status" value="1"/>
</dbReference>
<dbReference type="SUPFAM" id="SSF47802">
    <property type="entry name" value="DNA polymerase beta, N-terminal domain-like"/>
    <property type="match status" value="1"/>
</dbReference>
<dbReference type="SUPFAM" id="SSF81301">
    <property type="entry name" value="Nucleotidyltransferase"/>
    <property type="match status" value="1"/>
</dbReference>
<dbReference type="SUPFAM" id="SSF81585">
    <property type="entry name" value="PsbU/PolX domain-like"/>
    <property type="match status" value="1"/>
</dbReference>
<dbReference type="PROSITE" id="PS00522">
    <property type="entry name" value="DNA_POLYMERASE_X"/>
    <property type="match status" value="1"/>
</dbReference>
<comment type="function">
    <text evidence="2">Repair polymerase that plays a key role in base-excision repair. During this process, the damaged base is excised by specific DNA glycosylases, the DNA backbone is nicked at the abasic site by an apurinic/apyrimidic (AP) endonuclease, and POLB removes 5'-deoxyribose-phosphate from the preincised AP site acting as a 5'-deoxyribose-phosphate lyase (5'-dRP lyase); through its DNA polymerase activity, it adds one nucleotide to the 3' end of the arising single-nucleotide gap. Conducts 'gap-filling' DNA synthesis in a stepwise distributive fashion rather than in a processive fashion as for other DNA polymerases. It is also able to cleave sugar-phosphate bonds 3' to an intact AP site, acting as an AP lyase.</text>
</comment>
<comment type="catalytic activity">
    <reaction evidence="2">
        <text>DNA(n) + a 2'-deoxyribonucleoside 5'-triphosphate = DNA(n+1) + diphosphate</text>
        <dbReference type="Rhea" id="RHEA:22508"/>
        <dbReference type="Rhea" id="RHEA-COMP:17339"/>
        <dbReference type="Rhea" id="RHEA-COMP:17340"/>
        <dbReference type="ChEBI" id="CHEBI:33019"/>
        <dbReference type="ChEBI" id="CHEBI:61560"/>
        <dbReference type="ChEBI" id="CHEBI:173112"/>
        <dbReference type="EC" id="2.7.7.7"/>
    </reaction>
</comment>
<comment type="catalytic activity">
    <reaction evidence="2">
        <text>a 5'-end 2'-deoxyribose-2'-deoxyribonucleotide-DNA = (2E,4S)-4-hydroxypenten-2-al-5-phosphate + a 5'-end 5'-phospho-2'-deoxyribonucleoside-DNA + H(+)</text>
        <dbReference type="Rhea" id="RHEA:76255"/>
        <dbReference type="Rhea" id="RHEA-COMP:13180"/>
        <dbReference type="Rhea" id="RHEA-COMP:18657"/>
        <dbReference type="ChEBI" id="CHEBI:15378"/>
        <dbReference type="ChEBI" id="CHEBI:136412"/>
        <dbReference type="ChEBI" id="CHEBI:195194"/>
        <dbReference type="ChEBI" id="CHEBI:195195"/>
    </reaction>
</comment>
<comment type="catalytic activity">
    <reaction evidence="2">
        <text>2'-deoxyribonucleotide-(2'-deoxyribose 5'-phosphate)-2'-deoxyribonucleotide-DNA = a 3'-end 2'-deoxyribonucleotide-(2,3-dehydro-2,3-deoxyribose 5'-phosphate)-DNA + a 5'-end 5'-phospho-2'-deoxyribonucleoside-DNA + H(+)</text>
        <dbReference type="Rhea" id="RHEA:66592"/>
        <dbReference type="Rhea" id="RHEA-COMP:13180"/>
        <dbReference type="Rhea" id="RHEA-COMP:16897"/>
        <dbReference type="Rhea" id="RHEA-COMP:17067"/>
        <dbReference type="ChEBI" id="CHEBI:15378"/>
        <dbReference type="ChEBI" id="CHEBI:136412"/>
        <dbReference type="ChEBI" id="CHEBI:157695"/>
        <dbReference type="ChEBI" id="CHEBI:167181"/>
        <dbReference type="EC" id="4.2.99.18"/>
    </reaction>
</comment>
<comment type="cofactor">
    <cofactor evidence="2">
        <name>Mg(2+)</name>
        <dbReference type="ChEBI" id="CHEBI:18420"/>
    </cofactor>
    <text evidence="2">Binds 2 magnesium ions per subunit.</text>
</comment>
<comment type="subcellular location">
    <subcellularLocation>
        <location evidence="2">Nucleus</location>
    </subcellularLocation>
    <subcellularLocation>
        <location evidence="2">Cytoplasm</location>
    </subcellularLocation>
    <text evidence="2">Cytoplasmic in normal conditions. Translocates to the nucleus following DNA damage.</text>
</comment>
<comment type="PTM">
    <text evidence="1">Methylation by PRMT6 stimulates the polymerase activity by enhancing DNA binding and processivity.</text>
</comment>
<comment type="PTM">
    <text evidence="1">Ubiquitinated: monoubiquitinated by huwe1/arf-bp1. Monoubiquitinated protein is then the target of stub1/chip, which catalyzes polyubiquitination from monoubiquitin, leading to degradation by the proteasome. usp47 mediates the deubiquitination of monoubiquitinated protein, preventing polyubiquitination by STUB1/CHIP and its subsequent degradation (By similarity).</text>
</comment>
<comment type="similarity">
    <text evidence="3">Belongs to the DNA polymerase type-X family.</text>
</comment>
<sequence>SKRKAPQESLNEGITDFLVELANYERNVNRAIHKYNAYRKAASVIAKYPQKIKSGTEAKKLDGVGAKIAEKIDEFLTTGKLRKLEKIRNDDTSSSINFLTRVTGIGPAAARKFFDEGVRNLEDLKKIEHKLNHHQQIGLKYFEEFEKRIPRSEMQKMEALILKELDIVDPEYIGTICGSYRRGAESSGDIDILLTHPDFTSQSEKQPKLLHAVVDHLESIGFITDTLSKGDTKFMGVCQLQKEKEEEEEESLHRRIDIRLIPKDQYYCGVLYFTGSDIFNKNMRTHALEKGFTLNEYTIRPLGVTGVAGEPLLVDSEKDIFEYIQWKYREPKDRSE</sequence>
<keyword id="KW-0963">Cytoplasm</keyword>
<keyword id="KW-0227">DNA damage</keyword>
<keyword id="KW-0234">DNA repair</keyword>
<keyword id="KW-0235">DNA replication</keyword>
<keyword id="KW-0237">DNA synthesis</keyword>
<keyword id="KW-0238">DNA-binding</keyword>
<keyword id="KW-0239">DNA-directed DNA polymerase</keyword>
<keyword id="KW-0456">Lyase</keyword>
<keyword id="KW-0460">Magnesium</keyword>
<keyword id="KW-0479">Metal-binding</keyword>
<keyword id="KW-0488">Methylation</keyword>
<keyword id="KW-0548">Nucleotidyltransferase</keyword>
<keyword id="KW-0539">Nucleus</keyword>
<keyword id="KW-0630">Potassium</keyword>
<keyword id="KW-1185">Reference proteome</keyword>
<keyword id="KW-0915">Sodium</keyword>
<keyword id="KW-0808">Transferase</keyword>
<keyword id="KW-0832">Ubl conjugation</keyword>
<organism>
    <name type="scientific">Danio rerio</name>
    <name type="common">Zebrafish</name>
    <name type="synonym">Brachydanio rerio</name>
    <dbReference type="NCBI Taxonomy" id="7955"/>
    <lineage>
        <taxon>Eukaryota</taxon>
        <taxon>Metazoa</taxon>
        <taxon>Chordata</taxon>
        <taxon>Craniata</taxon>
        <taxon>Vertebrata</taxon>
        <taxon>Euteleostomi</taxon>
        <taxon>Actinopterygii</taxon>
        <taxon>Neopterygii</taxon>
        <taxon>Teleostei</taxon>
        <taxon>Ostariophysi</taxon>
        <taxon>Cypriniformes</taxon>
        <taxon>Danionidae</taxon>
        <taxon>Danioninae</taxon>
        <taxon>Danio</taxon>
    </lineage>
</organism>
<evidence type="ECO:0000250" key="1"/>
<evidence type="ECO:0000250" key="2">
    <source>
        <dbReference type="UniProtKB" id="P06746"/>
    </source>
</evidence>
<evidence type="ECO:0000305" key="3"/>